<evidence type="ECO:0000269" key="1">
    <source>
    </source>
</evidence>
<evidence type="ECO:0000269" key="2">
    <source>
    </source>
</evidence>
<evidence type="ECO:0000305" key="3"/>
<evidence type="ECO:0000305" key="4">
    <source>
    </source>
</evidence>
<comment type="function">
    <text evidence="3">Involved in capsid assembly.</text>
</comment>
<comment type="subcellular location">
    <subcellularLocation>
        <location evidence="2">Virion</location>
    </subcellularLocation>
    <subcellularLocation>
        <location evidence="4">Host cytoplasm</location>
    </subcellularLocation>
    <text evidence="2">Associated with the capsid, might be a minor capsid protein.</text>
</comment>
<comment type="induction">
    <text evidence="1">Expressed in the late phase of the viral replicative cycle. Expression of late genes is activated by the viral late transcription activator C.</text>
</comment>
<name>GPF_BPMU</name>
<dbReference type="EMBL" id="AF083977">
    <property type="protein sequence ID" value="AAF01108.1"/>
    <property type="molecule type" value="Genomic_DNA"/>
</dbReference>
<dbReference type="EMBL" id="M74911">
    <property type="protein sequence ID" value="AAA68900.1"/>
    <property type="molecule type" value="Genomic_DNA"/>
</dbReference>
<dbReference type="PIR" id="A56613">
    <property type="entry name" value="A56613"/>
</dbReference>
<dbReference type="RefSeq" id="NP_050634.1">
    <property type="nucleotide sequence ID" value="NC_000929.1"/>
</dbReference>
<dbReference type="SMR" id="Q01259"/>
<dbReference type="GeneID" id="2636300"/>
<dbReference type="KEGG" id="vg:2636300"/>
<dbReference type="Proteomes" id="UP000002611">
    <property type="component" value="Genome"/>
</dbReference>
<dbReference type="GO" id="GO:0030430">
    <property type="term" value="C:host cell cytoplasm"/>
    <property type="evidence" value="ECO:0007669"/>
    <property type="project" value="UniProtKB-SubCell"/>
</dbReference>
<dbReference type="GO" id="GO:0044423">
    <property type="term" value="C:virion component"/>
    <property type="evidence" value="ECO:0007669"/>
    <property type="project" value="UniProtKB-KW"/>
</dbReference>
<dbReference type="InterPro" id="IPR006528">
    <property type="entry name" value="Phage_head_morphogenesis_dom"/>
</dbReference>
<dbReference type="NCBIfam" id="TIGR01641">
    <property type="entry name" value="phageSPP1_gp7"/>
    <property type="match status" value="1"/>
</dbReference>
<dbReference type="Pfam" id="PF04233">
    <property type="entry name" value="Phage_Mu_F"/>
    <property type="match status" value="1"/>
</dbReference>
<accession>Q01259</accession>
<accession>Q9T1W4</accession>
<organism>
    <name type="scientific">Escherichia phage Mu</name>
    <name type="common">Bacteriophage Mu</name>
    <dbReference type="NCBI Taxonomy" id="2681603"/>
    <lineage>
        <taxon>Viruses</taxon>
        <taxon>Duplodnaviria</taxon>
        <taxon>Heunggongvirae</taxon>
        <taxon>Uroviricota</taxon>
        <taxon>Caudoviricetes</taxon>
        <taxon>Muvirus</taxon>
        <taxon>Muvirus mu</taxon>
    </lineage>
</organism>
<organismHost>
    <name type="scientific">Enterobacteriaceae</name>
    <dbReference type="NCBI Taxonomy" id="543"/>
</organismHost>
<sequence>MPQQTIDLAYAARLPPKEAVAYFRAKGYNITWNWYEQLADAHARAFTVAKATRMDVLTTIREEVERAVSEGITREEFTRTLAPRLQKLGWWGKQIIVDAEGNAKEIELGSPRRLATIYNVNTRTAYGAGRYAQMMNTADLYPYWQYVAVMDGRTRPEHARLHNMVFQYDDIFWQTHYPPNGWNCRCRVRALSAARMKELGLQVSYGASFMNTREVDAGTDESTGEIFRTSSTTFDNGRVKMTPDVGWSYNPGSAAFGTDQALIRKLVEVRDAQLREQVVQTLNNSRERQLAFSLWLKRLAGSRQTGHEIRALGFMTGSVAEAVYQRTGNMPARLLVMNGKSLATTADAALKPEDLQRLPSLMAKPQAVLWDRENHQLLYVVATRDGTARIVVRTSQTVGRQNDRADVLVSISRVSAQSLEAAIADGMIDVLEGHVEVNK</sequence>
<gene>
    <name type="primary">F</name>
    <name type="ordered locus">Mup30</name>
</gene>
<keyword id="KW-1035">Host cytoplasm</keyword>
<keyword id="KW-0426">Late protein</keyword>
<keyword id="KW-1185">Reference proteome</keyword>
<keyword id="KW-0118">Viral capsid assembly</keyword>
<keyword id="KW-1188">Viral release from host cell</keyword>
<keyword id="KW-0946">Virion</keyword>
<reference key="1">
    <citation type="journal article" date="2002" name="J. Mol. Biol.">
        <title>Bacteriophage Mu genome sequence: analysis and comparison with Mu-like prophages in Haemophilus, Neisseria and Deinococcus.</title>
        <authorList>
            <person name="Morgan G.J."/>
            <person name="Hatfull G.F."/>
            <person name="Casjens S."/>
            <person name="Hendrix R.W."/>
        </authorList>
    </citation>
    <scope>NUCLEOTIDE SEQUENCE [LARGE SCALE GENOMIC DNA]</scope>
</reference>
<reference key="2">
    <citation type="journal article" date="1992" name="DNA Seq.">
        <title>DNA sequence characterization of the G gene region of bacteriophage Mu.</title>
        <authorList>
            <person name="Baxa C.A."/>
            <person name="Chiang L."/>
            <person name="Howe M.M."/>
        </authorList>
    </citation>
    <scope>NUCLEOTIDE SEQUENCE [GENOMIC DNA] OF 317-439</scope>
</reference>
<reference key="3">
    <citation type="journal article" date="1993" name="Genetics">
        <title>Mutational analysis of a C-dependent late promoter of bacteriophage Mu.</title>
        <authorList>
            <person name="Chiang L.W."/>
            <person name="Howe M.M."/>
        </authorList>
    </citation>
    <scope>INDUCTION</scope>
</reference>
<reference key="4">
    <citation type="journal article" date="1996" name="Virology">
        <title>Bacteriophage Mu head assembly.</title>
        <authorList>
            <person name="Grimaud R."/>
        </authorList>
    </citation>
    <scope>SUBCELLULAR LOCATION</scope>
</reference>
<feature type="chain" id="PRO_0000077680" description="Putative capsid assembly protein F">
    <location>
        <begin position="1"/>
        <end position="439"/>
    </location>
</feature>
<proteinExistence type="evidence at transcript level"/>
<protein>
    <recommendedName>
        <fullName>Putative capsid assembly protein F</fullName>
    </recommendedName>
    <alternativeName>
        <fullName>Gene product 30</fullName>
        <shortName>gp30</shortName>
    </alternativeName>
    <alternativeName>
        <fullName>Gene product F</fullName>
        <shortName>gpF</shortName>
    </alternativeName>
</protein>